<keyword id="KW-0067">ATP-binding</keyword>
<keyword id="KW-0175">Coiled coil</keyword>
<keyword id="KW-0903">Direct protein sequencing</keyword>
<keyword id="KW-0547">Nucleotide-binding</keyword>
<keyword id="KW-1185">Reference proteome</keyword>
<evidence type="ECO:0000255" key="1"/>
<evidence type="ECO:0000256" key="2">
    <source>
        <dbReference type="SAM" id="MobiDB-lite"/>
    </source>
</evidence>
<evidence type="ECO:0000269" key="3">
    <source>
    </source>
</evidence>
<evidence type="ECO:0000305" key="4"/>
<evidence type="ECO:0000312" key="5">
    <source>
        <dbReference type="PomBase" id="SPBC16E9.16c"/>
    </source>
</evidence>
<organism>
    <name type="scientific">Schizosaccharomyces pombe (strain 972 / ATCC 24843)</name>
    <name type="common">Fission yeast</name>
    <dbReference type="NCBI Taxonomy" id="284812"/>
    <lineage>
        <taxon>Eukaryota</taxon>
        <taxon>Fungi</taxon>
        <taxon>Dikarya</taxon>
        <taxon>Ascomycota</taxon>
        <taxon>Taphrinomycotina</taxon>
        <taxon>Schizosaccharomycetes</taxon>
        <taxon>Schizosaccharomycetales</taxon>
        <taxon>Schizosaccharomycetaceae</taxon>
        <taxon>Schizosaccharomyces</taxon>
    </lineage>
</organism>
<name>LSD90_SCHPO</name>
<gene>
    <name type="primary">lsd90</name>
    <name evidence="5" type="ORF">SPBC16E9.16c</name>
</gene>
<feature type="initiator methionine" description="Removed" evidence="3">
    <location>
        <position position="1"/>
    </location>
</feature>
<feature type="chain" id="PRO_0000415924" description="Protein lsd90">
    <location>
        <begin position="2"/>
        <end position="757"/>
    </location>
</feature>
<feature type="region of interest" description="Disordered" evidence="2">
    <location>
        <begin position="1"/>
        <end position="131"/>
    </location>
</feature>
<feature type="region of interest" description="Disordered" evidence="2">
    <location>
        <begin position="224"/>
        <end position="244"/>
    </location>
</feature>
<feature type="region of interest" description="Disordered" evidence="2">
    <location>
        <begin position="589"/>
        <end position="633"/>
    </location>
</feature>
<feature type="region of interest" description="Disordered" evidence="2">
    <location>
        <begin position="657"/>
        <end position="757"/>
    </location>
</feature>
<feature type="coiled-coil region" evidence="1">
    <location>
        <begin position="166"/>
        <end position="604"/>
    </location>
</feature>
<feature type="compositionally biased region" description="Polar residues" evidence="2">
    <location>
        <begin position="1"/>
        <end position="11"/>
    </location>
</feature>
<feature type="compositionally biased region" description="Polar residues" evidence="2">
    <location>
        <begin position="19"/>
        <end position="36"/>
    </location>
</feature>
<feature type="compositionally biased region" description="Polar residues" evidence="2">
    <location>
        <begin position="51"/>
        <end position="69"/>
    </location>
</feature>
<feature type="compositionally biased region" description="Polar residues" evidence="2">
    <location>
        <begin position="94"/>
        <end position="118"/>
    </location>
</feature>
<feature type="compositionally biased region" description="Basic and acidic residues" evidence="2">
    <location>
        <begin position="589"/>
        <end position="598"/>
    </location>
</feature>
<feature type="compositionally biased region" description="Polar residues" evidence="2">
    <location>
        <begin position="619"/>
        <end position="632"/>
    </location>
</feature>
<feature type="compositionally biased region" description="Low complexity" evidence="2">
    <location>
        <begin position="674"/>
        <end position="693"/>
    </location>
</feature>
<feature type="binding site" evidence="1">
    <location>
        <begin position="718"/>
        <end position="725"/>
    </location>
    <ligand>
        <name>ATP</name>
        <dbReference type="ChEBI" id="CHEBI:30616"/>
    </ligand>
</feature>
<feature type="sequence conflict" description="In Ref. 1; BAF98920/AA sequence." evidence="4" ref="1">
    <original>LP</original>
    <variation>PS</variation>
    <location>
        <begin position="69"/>
        <end position="70"/>
    </location>
</feature>
<feature type="sequence conflict" description="In Ref. 1; BAF98920/AA sequence." evidence="4" ref="1">
    <location>
        <position position="435"/>
    </location>
</feature>
<sequence>MVGTINESMQNMKIGAKETAQSAKQGIKNAGQSSSKTARDVMGNPVPGSYTAGNTANDGDSSYASSKNLPGNADIGATSSERTAYAAPQRAAVDTSNVSPPSTQTGGYASKDTTSTYEGAQPLSSQSSRSSNYTNVKITATQNNVDALTGAPIRIVTTTNARIQPDEKTLQDLLEQRQVALREAREAEEELQRARQYNDRSTSEALELEARAKKAAQDAELASERAREAQSSIERSASLREKQAREEAERAATALREAELKHRLAQANADVDVANSKLDIALKNEAAWKAERESSLAHQKAVIDSARAELERARHEAAVADATYKKEHYEYNALVAELEERNDNTLRTASIREAEARNLEVHMEDTLKDARMRSRNATEQVEVVKREINSEIDVYRSSVEKTKAELASYQKGLPSQKEACDRELDDATRALQAAFQDRFNAAKLRVNQFDVDSRQQLAMLTKKVRDAEDAEEKYRISCHQREEEITRCATQAYDAVKAAEKRNETIAEAARAKENEAKDLYSKAESITQDLNAKRSHPPQPANLDYSSAIQRAQERLTLEESKLTDLRTAEPSQYVNDVEVARRALRDAQAEQSKVESEYNSVKGSKLYTTEPVHPHAVTTNEPTDVSTKSKSAAYHYPATTETVSSKAARSATTPAYVGGATKTPSTTKAVESTPSTLPTSASTNAAATTTTKKPKAAKSTAVRDDVSSASSDSDKGTTGLGKSESKSSRKERRSSTSSGHGLMNNVRHALGMSNK</sequence>
<comment type="function">
    <text evidence="3">May be involved in the metabolism of very long-chain fatty acid-containing phospholipids (VLCFA-PL).</text>
</comment>
<comment type="subcellular location">
    <text evidence="3">Localizes to small particle-like structures, that differ from either the mitochondria, the endoplasmic reticulum near the nucleus, or the peroxisomes.</text>
</comment>
<protein>
    <recommendedName>
        <fullName>Protein lsd90</fullName>
    </recommendedName>
    <alternativeName>
        <fullName>90kDa large and small daughter protein</fullName>
    </alternativeName>
</protein>
<dbReference type="EMBL" id="AB012755">
    <property type="protein sequence ID" value="BAF98920.1"/>
    <property type="molecule type" value="mRNA"/>
</dbReference>
<dbReference type="EMBL" id="CU329671">
    <property type="protein sequence ID" value="CAK9840093.1"/>
    <property type="molecule type" value="Genomic_DNA"/>
</dbReference>
<dbReference type="SMR" id="A9ZLL8"/>
<dbReference type="STRING" id="284812.A9ZLL8"/>
<dbReference type="iPTMnet" id="A9ZLL8"/>
<dbReference type="SwissPalm" id="A9ZLL8"/>
<dbReference type="PaxDb" id="4896-SPBC16E9.16c.1"/>
<dbReference type="PomBase" id="SPBC16E9.16c">
    <property type="gene designation" value="lsd90"/>
</dbReference>
<dbReference type="HOGENOM" id="CLU_351304_0_0_1"/>
<dbReference type="InParanoid" id="A9ZLL8"/>
<dbReference type="PRO" id="PR:A9ZLL8"/>
<dbReference type="Proteomes" id="UP000002485">
    <property type="component" value="Chromosome II"/>
</dbReference>
<dbReference type="GO" id="GO:0005524">
    <property type="term" value="F:ATP binding"/>
    <property type="evidence" value="ECO:0007669"/>
    <property type="project" value="UniProtKB-KW"/>
</dbReference>
<dbReference type="GO" id="GO:0042759">
    <property type="term" value="P:long-chain fatty acid biosynthetic process"/>
    <property type="evidence" value="ECO:0000315"/>
    <property type="project" value="PomBase"/>
</dbReference>
<proteinExistence type="evidence at protein level"/>
<reference key="1">
    <citation type="journal article" date="2008" name="J. Biochem.">
        <title>Expression of a novel 90-kDa protein, Lsd90, involved in the metabolism of very long-chain fatty acid-containing phospholipids in a mitosis-defective fission yeast mutant.</title>
        <authorList>
            <person name="Yokoyama K."/>
            <person name="Nakagawa M."/>
            <person name="Satoh M."/>
            <person name="Saitoh S."/>
            <person name="Dohmae N."/>
            <person name="Harada A."/>
            <person name="Satoh N."/>
            <person name="Karasawa K."/>
            <person name="Takio K."/>
            <person name="Yanagida M."/>
            <person name="Inoue K."/>
        </authorList>
    </citation>
    <scope>NUCLEOTIDE SEQUENCE [MRNA]</scope>
    <scope>PROTEIN SEQUENCE OF 2-21; 68-106; 112-123; 215-234; 284-289; 404-411; 418-442 AND 608-630</scope>
    <scope>FUNCTION</scope>
    <scope>SUBCELLULAR LOCATION</scope>
    <source>
        <strain>972 / ATCC 24843</strain>
    </source>
</reference>
<reference key="2">
    <citation type="journal article" date="2002" name="Nature">
        <title>The genome sequence of Schizosaccharomyces pombe.</title>
        <authorList>
            <person name="Wood V."/>
            <person name="Gwilliam R."/>
            <person name="Rajandream M.A."/>
            <person name="Lyne M.H."/>
            <person name="Lyne R."/>
            <person name="Stewart A."/>
            <person name="Sgouros J.G."/>
            <person name="Peat N."/>
            <person name="Hayles J."/>
            <person name="Baker S.G."/>
            <person name="Basham D."/>
            <person name="Bowman S."/>
            <person name="Brooks K."/>
            <person name="Brown D."/>
            <person name="Brown S."/>
            <person name="Chillingworth T."/>
            <person name="Churcher C.M."/>
            <person name="Collins M."/>
            <person name="Connor R."/>
            <person name="Cronin A."/>
            <person name="Davis P."/>
            <person name="Feltwell T."/>
            <person name="Fraser A."/>
            <person name="Gentles S."/>
            <person name="Goble A."/>
            <person name="Hamlin N."/>
            <person name="Harris D.E."/>
            <person name="Hidalgo J."/>
            <person name="Hodgson G."/>
            <person name="Holroyd S."/>
            <person name="Hornsby T."/>
            <person name="Howarth S."/>
            <person name="Huckle E.J."/>
            <person name="Hunt S."/>
            <person name="Jagels K."/>
            <person name="James K.D."/>
            <person name="Jones L."/>
            <person name="Jones M."/>
            <person name="Leather S."/>
            <person name="McDonald S."/>
            <person name="McLean J."/>
            <person name="Mooney P."/>
            <person name="Moule S."/>
            <person name="Mungall K.L."/>
            <person name="Murphy L.D."/>
            <person name="Niblett D."/>
            <person name="Odell C."/>
            <person name="Oliver K."/>
            <person name="O'Neil S."/>
            <person name="Pearson D."/>
            <person name="Quail M.A."/>
            <person name="Rabbinowitsch E."/>
            <person name="Rutherford K.M."/>
            <person name="Rutter S."/>
            <person name="Saunders D."/>
            <person name="Seeger K."/>
            <person name="Sharp S."/>
            <person name="Skelton J."/>
            <person name="Simmonds M.N."/>
            <person name="Squares R."/>
            <person name="Squares S."/>
            <person name="Stevens K."/>
            <person name="Taylor K."/>
            <person name="Taylor R.G."/>
            <person name="Tivey A."/>
            <person name="Walsh S.V."/>
            <person name="Warren T."/>
            <person name="Whitehead S."/>
            <person name="Woodward J.R."/>
            <person name="Volckaert G."/>
            <person name="Aert R."/>
            <person name="Robben J."/>
            <person name="Grymonprez B."/>
            <person name="Weltjens I."/>
            <person name="Vanstreels E."/>
            <person name="Rieger M."/>
            <person name="Schaefer M."/>
            <person name="Mueller-Auer S."/>
            <person name="Gabel C."/>
            <person name="Fuchs M."/>
            <person name="Duesterhoeft A."/>
            <person name="Fritzc C."/>
            <person name="Holzer E."/>
            <person name="Moestl D."/>
            <person name="Hilbert H."/>
            <person name="Borzym K."/>
            <person name="Langer I."/>
            <person name="Beck A."/>
            <person name="Lehrach H."/>
            <person name="Reinhardt R."/>
            <person name="Pohl T.M."/>
            <person name="Eger P."/>
            <person name="Zimmermann W."/>
            <person name="Wedler H."/>
            <person name="Wambutt R."/>
            <person name="Purnelle B."/>
            <person name="Goffeau A."/>
            <person name="Cadieu E."/>
            <person name="Dreano S."/>
            <person name="Gloux S."/>
            <person name="Lelaure V."/>
            <person name="Mottier S."/>
            <person name="Galibert F."/>
            <person name="Aves S.J."/>
            <person name="Xiang Z."/>
            <person name="Hunt C."/>
            <person name="Moore K."/>
            <person name="Hurst S.M."/>
            <person name="Lucas M."/>
            <person name="Rochet M."/>
            <person name="Gaillardin C."/>
            <person name="Tallada V.A."/>
            <person name="Garzon A."/>
            <person name="Thode G."/>
            <person name="Daga R.R."/>
            <person name="Cruzado L."/>
            <person name="Jimenez J."/>
            <person name="Sanchez M."/>
            <person name="del Rey F."/>
            <person name="Benito J."/>
            <person name="Dominguez A."/>
            <person name="Revuelta J.L."/>
            <person name="Moreno S."/>
            <person name="Armstrong J."/>
            <person name="Forsburg S.L."/>
            <person name="Cerutti L."/>
            <person name="Lowe T."/>
            <person name="McCombie W.R."/>
            <person name="Paulsen I."/>
            <person name="Potashkin J."/>
            <person name="Shpakovski G.V."/>
            <person name="Ussery D."/>
            <person name="Barrell B.G."/>
            <person name="Nurse P."/>
        </authorList>
    </citation>
    <scope>NUCLEOTIDE SEQUENCE [LARGE SCALE GENOMIC DNA]</scope>
    <source>
        <strain>972 / ATCC 24843</strain>
    </source>
</reference>
<reference key="3">
    <citation type="journal article" date="2015" name="Genome Biol. Evol.">
        <title>Bulk segregant analysis reveals the genetic basis of a natural trait variation in fission yeast.</title>
        <authorList>
            <person name="Hu W."/>
            <person name="Suo F."/>
            <person name="Du L.L."/>
        </authorList>
    </citation>
    <scope>SEQUENCE REVISION</scope>
</reference>
<accession>A9ZLL8</accession>
<accession>A0AAN2H820</accession>